<protein>
    <recommendedName>
        <fullName evidence="1">Large ribosomal subunit protein uL30</fullName>
    </recommendedName>
    <alternativeName>
        <fullName evidence="2">50S ribosomal protein L30</fullName>
    </alternativeName>
</protein>
<dbReference type="EMBL" id="CP000388">
    <property type="protein sequence ID" value="ABG39533.1"/>
    <property type="molecule type" value="Genomic_DNA"/>
</dbReference>
<dbReference type="SMR" id="Q15X55"/>
<dbReference type="STRING" id="342610.Patl_1007"/>
<dbReference type="KEGG" id="pat:Patl_1007"/>
<dbReference type="eggNOG" id="COG1841">
    <property type="taxonomic scope" value="Bacteria"/>
</dbReference>
<dbReference type="HOGENOM" id="CLU_131047_1_4_6"/>
<dbReference type="Proteomes" id="UP000001981">
    <property type="component" value="Chromosome"/>
</dbReference>
<dbReference type="GO" id="GO:0022625">
    <property type="term" value="C:cytosolic large ribosomal subunit"/>
    <property type="evidence" value="ECO:0007669"/>
    <property type="project" value="TreeGrafter"/>
</dbReference>
<dbReference type="GO" id="GO:0003735">
    <property type="term" value="F:structural constituent of ribosome"/>
    <property type="evidence" value="ECO:0007669"/>
    <property type="project" value="InterPro"/>
</dbReference>
<dbReference type="GO" id="GO:0006412">
    <property type="term" value="P:translation"/>
    <property type="evidence" value="ECO:0007669"/>
    <property type="project" value="UniProtKB-UniRule"/>
</dbReference>
<dbReference type="CDD" id="cd01658">
    <property type="entry name" value="Ribosomal_L30"/>
    <property type="match status" value="1"/>
</dbReference>
<dbReference type="FunFam" id="3.30.1390.20:FF:000001">
    <property type="entry name" value="50S ribosomal protein L30"/>
    <property type="match status" value="1"/>
</dbReference>
<dbReference type="Gene3D" id="3.30.1390.20">
    <property type="entry name" value="Ribosomal protein L30, ferredoxin-like fold domain"/>
    <property type="match status" value="1"/>
</dbReference>
<dbReference type="HAMAP" id="MF_01371_B">
    <property type="entry name" value="Ribosomal_uL30_B"/>
    <property type="match status" value="1"/>
</dbReference>
<dbReference type="InterPro" id="IPR036919">
    <property type="entry name" value="Ribo_uL30_ferredoxin-like_sf"/>
</dbReference>
<dbReference type="InterPro" id="IPR005996">
    <property type="entry name" value="Ribosomal_uL30_bac-type"/>
</dbReference>
<dbReference type="InterPro" id="IPR018038">
    <property type="entry name" value="Ribosomal_uL30_CS"/>
</dbReference>
<dbReference type="InterPro" id="IPR016082">
    <property type="entry name" value="Ribosomal_uL30_ferredoxin-like"/>
</dbReference>
<dbReference type="NCBIfam" id="TIGR01308">
    <property type="entry name" value="rpmD_bact"/>
    <property type="match status" value="1"/>
</dbReference>
<dbReference type="PANTHER" id="PTHR15892:SF2">
    <property type="entry name" value="LARGE RIBOSOMAL SUBUNIT PROTEIN UL30M"/>
    <property type="match status" value="1"/>
</dbReference>
<dbReference type="PANTHER" id="PTHR15892">
    <property type="entry name" value="MITOCHONDRIAL RIBOSOMAL PROTEIN L30"/>
    <property type="match status" value="1"/>
</dbReference>
<dbReference type="Pfam" id="PF00327">
    <property type="entry name" value="Ribosomal_L30"/>
    <property type="match status" value="1"/>
</dbReference>
<dbReference type="PIRSF" id="PIRSF002211">
    <property type="entry name" value="Ribosomal_L30_bac-type"/>
    <property type="match status" value="1"/>
</dbReference>
<dbReference type="SUPFAM" id="SSF55129">
    <property type="entry name" value="Ribosomal protein L30p/L7e"/>
    <property type="match status" value="1"/>
</dbReference>
<dbReference type="PROSITE" id="PS00634">
    <property type="entry name" value="RIBOSOMAL_L30"/>
    <property type="match status" value="1"/>
</dbReference>
<gene>
    <name evidence="1" type="primary">rpmD</name>
    <name type="ordered locus">Patl_1007</name>
</gene>
<sequence length="62" mass="7065">MNMAKMIKVKQTKSAIGRLPKHKATLTGLGLRRIGHVRELEDTPSVRGMINRVFYMVEVVEE</sequence>
<feature type="chain" id="PRO_0000273824" description="Large ribosomal subunit protein uL30">
    <location>
        <begin position="1"/>
        <end position="62"/>
    </location>
</feature>
<reference key="1">
    <citation type="submission" date="2006-06" db="EMBL/GenBank/DDBJ databases">
        <title>Complete sequence of Pseudoalteromonas atlantica T6c.</title>
        <authorList>
            <consortium name="US DOE Joint Genome Institute"/>
            <person name="Copeland A."/>
            <person name="Lucas S."/>
            <person name="Lapidus A."/>
            <person name="Barry K."/>
            <person name="Detter J.C."/>
            <person name="Glavina del Rio T."/>
            <person name="Hammon N."/>
            <person name="Israni S."/>
            <person name="Dalin E."/>
            <person name="Tice H."/>
            <person name="Pitluck S."/>
            <person name="Saunders E."/>
            <person name="Brettin T."/>
            <person name="Bruce D."/>
            <person name="Han C."/>
            <person name="Tapia R."/>
            <person name="Gilna P."/>
            <person name="Schmutz J."/>
            <person name="Larimer F."/>
            <person name="Land M."/>
            <person name="Hauser L."/>
            <person name="Kyrpides N."/>
            <person name="Kim E."/>
            <person name="Karls A.C."/>
            <person name="Bartlett D."/>
            <person name="Higgins B.P."/>
            <person name="Richardson P."/>
        </authorList>
    </citation>
    <scope>NUCLEOTIDE SEQUENCE [LARGE SCALE GENOMIC DNA]</scope>
    <source>
        <strain>T6c / ATCC BAA-1087</strain>
    </source>
</reference>
<organism>
    <name type="scientific">Pseudoalteromonas atlantica (strain T6c / ATCC BAA-1087)</name>
    <dbReference type="NCBI Taxonomy" id="3042615"/>
    <lineage>
        <taxon>Bacteria</taxon>
        <taxon>Pseudomonadati</taxon>
        <taxon>Pseudomonadota</taxon>
        <taxon>Gammaproteobacteria</taxon>
        <taxon>Alteromonadales</taxon>
        <taxon>Alteromonadaceae</taxon>
        <taxon>Paraglaciecola</taxon>
    </lineage>
</organism>
<evidence type="ECO:0000255" key="1">
    <source>
        <dbReference type="HAMAP-Rule" id="MF_01371"/>
    </source>
</evidence>
<evidence type="ECO:0000305" key="2"/>
<keyword id="KW-0687">Ribonucleoprotein</keyword>
<keyword id="KW-0689">Ribosomal protein</keyword>
<name>RL30_PSEA6</name>
<proteinExistence type="inferred from homology"/>
<accession>Q15X55</accession>
<comment type="subunit">
    <text evidence="1">Part of the 50S ribosomal subunit.</text>
</comment>
<comment type="similarity">
    <text evidence="1">Belongs to the universal ribosomal protein uL30 family.</text>
</comment>